<organism>
    <name type="scientific">Nitrosococcus oceani (strain ATCC 19707 / BCRC 17464 / JCM 30415 / NCIMB 11848 / C-107)</name>
    <dbReference type="NCBI Taxonomy" id="323261"/>
    <lineage>
        <taxon>Bacteria</taxon>
        <taxon>Pseudomonadati</taxon>
        <taxon>Pseudomonadota</taxon>
        <taxon>Gammaproteobacteria</taxon>
        <taxon>Chromatiales</taxon>
        <taxon>Chromatiaceae</taxon>
        <taxon>Nitrosococcus</taxon>
    </lineage>
</organism>
<gene>
    <name evidence="1" type="primary">groES</name>
    <name evidence="1" type="synonym">groS</name>
    <name type="ordered locus">Noc_2922</name>
</gene>
<protein>
    <recommendedName>
        <fullName evidence="1">Co-chaperonin GroES</fullName>
    </recommendedName>
    <alternativeName>
        <fullName evidence="1">10 kDa chaperonin</fullName>
    </alternativeName>
    <alternativeName>
        <fullName evidence="1">Chaperonin-10</fullName>
        <shortName evidence="1">Cpn10</shortName>
    </alternativeName>
</protein>
<keyword id="KW-0143">Chaperone</keyword>
<keyword id="KW-0963">Cytoplasm</keyword>
<keyword id="KW-1185">Reference proteome</keyword>
<sequence>MKIRPLHDRVIVRRMEEEKTSSGGIVIPDTAAEKPIRGEVVAVGNGKILESGEVRALDVKVGDKVLFGKYSGTDVKVESEELLVMREDDIMAVLEG</sequence>
<comment type="function">
    <text evidence="1">Together with the chaperonin GroEL, plays an essential role in assisting protein folding. The GroEL-GroES system forms a nano-cage that allows encapsulation of the non-native substrate proteins and provides a physical environment optimized to promote and accelerate protein folding. GroES binds to the apical surface of the GroEL ring, thereby capping the opening of the GroEL channel.</text>
</comment>
<comment type="subunit">
    <text evidence="1">Heptamer of 7 subunits arranged in a ring. Interacts with the chaperonin GroEL.</text>
</comment>
<comment type="subcellular location">
    <subcellularLocation>
        <location evidence="1">Cytoplasm</location>
    </subcellularLocation>
</comment>
<comment type="similarity">
    <text evidence="1">Belongs to the GroES chaperonin family.</text>
</comment>
<reference key="1">
    <citation type="journal article" date="2006" name="Appl. Environ. Microbiol.">
        <title>Complete genome sequence of the marine, chemolithoautotrophic, ammonia-oxidizing bacterium Nitrosococcus oceani ATCC 19707.</title>
        <authorList>
            <person name="Klotz M.G."/>
            <person name="Arp D.J."/>
            <person name="Chain P.S.G."/>
            <person name="El-Sheikh A.F."/>
            <person name="Hauser L.J."/>
            <person name="Hommes N.G."/>
            <person name="Larimer F.W."/>
            <person name="Malfatti S.A."/>
            <person name="Norton J.M."/>
            <person name="Poret-Peterson A.T."/>
            <person name="Vergez L.M."/>
            <person name="Ward B.B."/>
        </authorList>
    </citation>
    <scope>NUCLEOTIDE SEQUENCE [LARGE SCALE GENOMIC DNA]</scope>
    <source>
        <strain>ATCC 19707 / BCRC 17464 / JCM 30415 / NCIMB 11848 / C-107</strain>
    </source>
</reference>
<accession>Q3J728</accession>
<evidence type="ECO:0000255" key="1">
    <source>
        <dbReference type="HAMAP-Rule" id="MF_00580"/>
    </source>
</evidence>
<dbReference type="EMBL" id="CP000127">
    <property type="protein sequence ID" value="ABA59368.1"/>
    <property type="molecule type" value="Genomic_DNA"/>
</dbReference>
<dbReference type="RefSeq" id="WP_011331096.1">
    <property type="nucleotide sequence ID" value="NC_007484.1"/>
</dbReference>
<dbReference type="SMR" id="Q3J728"/>
<dbReference type="FunCoup" id="Q3J728">
    <property type="interactions" value="553"/>
</dbReference>
<dbReference type="STRING" id="323261.Noc_2922"/>
<dbReference type="KEGG" id="noc:Noc_2922"/>
<dbReference type="eggNOG" id="COG0234">
    <property type="taxonomic scope" value="Bacteria"/>
</dbReference>
<dbReference type="HOGENOM" id="CLU_132825_1_0_6"/>
<dbReference type="InParanoid" id="Q3J728"/>
<dbReference type="Proteomes" id="UP000006838">
    <property type="component" value="Chromosome"/>
</dbReference>
<dbReference type="GO" id="GO:0005737">
    <property type="term" value="C:cytoplasm"/>
    <property type="evidence" value="ECO:0007669"/>
    <property type="project" value="UniProtKB-SubCell"/>
</dbReference>
<dbReference type="GO" id="GO:0005524">
    <property type="term" value="F:ATP binding"/>
    <property type="evidence" value="ECO:0007669"/>
    <property type="project" value="InterPro"/>
</dbReference>
<dbReference type="GO" id="GO:0046872">
    <property type="term" value="F:metal ion binding"/>
    <property type="evidence" value="ECO:0007669"/>
    <property type="project" value="TreeGrafter"/>
</dbReference>
<dbReference type="GO" id="GO:0044183">
    <property type="term" value="F:protein folding chaperone"/>
    <property type="evidence" value="ECO:0007669"/>
    <property type="project" value="InterPro"/>
</dbReference>
<dbReference type="GO" id="GO:0051087">
    <property type="term" value="F:protein-folding chaperone binding"/>
    <property type="evidence" value="ECO:0007669"/>
    <property type="project" value="TreeGrafter"/>
</dbReference>
<dbReference type="GO" id="GO:0051082">
    <property type="term" value="F:unfolded protein binding"/>
    <property type="evidence" value="ECO:0007669"/>
    <property type="project" value="TreeGrafter"/>
</dbReference>
<dbReference type="GO" id="GO:0051085">
    <property type="term" value="P:chaperone cofactor-dependent protein refolding"/>
    <property type="evidence" value="ECO:0007669"/>
    <property type="project" value="TreeGrafter"/>
</dbReference>
<dbReference type="CDD" id="cd00320">
    <property type="entry name" value="cpn10"/>
    <property type="match status" value="1"/>
</dbReference>
<dbReference type="FunFam" id="2.30.33.40:FF:000001">
    <property type="entry name" value="10 kDa chaperonin"/>
    <property type="match status" value="1"/>
</dbReference>
<dbReference type="Gene3D" id="2.30.33.40">
    <property type="entry name" value="GroES chaperonin"/>
    <property type="match status" value="1"/>
</dbReference>
<dbReference type="HAMAP" id="MF_00580">
    <property type="entry name" value="CH10"/>
    <property type="match status" value="1"/>
</dbReference>
<dbReference type="InterPro" id="IPR020818">
    <property type="entry name" value="Chaperonin_GroES"/>
</dbReference>
<dbReference type="InterPro" id="IPR037124">
    <property type="entry name" value="Chaperonin_GroES_sf"/>
</dbReference>
<dbReference type="InterPro" id="IPR018369">
    <property type="entry name" value="Chaprnonin_Cpn10_CS"/>
</dbReference>
<dbReference type="InterPro" id="IPR011032">
    <property type="entry name" value="GroES-like_sf"/>
</dbReference>
<dbReference type="NCBIfam" id="NF001527">
    <property type="entry name" value="PRK00364.1-2"/>
    <property type="match status" value="1"/>
</dbReference>
<dbReference type="NCBIfam" id="NF001529">
    <property type="entry name" value="PRK00364.1-5"/>
    <property type="match status" value="1"/>
</dbReference>
<dbReference type="NCBIfam" id="NF001531">
    <property type="entry name" value="PRK00364.2-2"/>
    <property type="match status" value="1"/>
</dbReference>
<dbReference type="NCBIfam" id="NF001533">
    <property type="entry name" value="PRK00364.2-4"/>
    <property type="match status" value="1"/>
</dbReference>
<dbReference type="NCBIfam" id="NF001534">
    <property type="entry name" value="PRK00364.2-5"/>
    <property type="match status" value="1"/>
</dbReference>
<dbReference type="PANTHER" id="PTHR10772">
    <property type="entry name" value="10 KDA HEAT SHOCK PROTEIN"/>
    <property type="match status" value="1"/>
</dbReference>
<dbReference type="PANTHER" id="PTHR10772:SF58">
    <property type="entry name" value="CO-CHAPERONIN GROES"/>
    <property type="match status" value="1"/>
</dbReference>
<dbReference type="Pfam" id="PF00166">
    <property type="entry name" value="Cpn10"/>
    <property type="match status" value="1"/>
</dbReference>
<dbReference type="PRINTS" id="PR00297">
    <property type="entry name" value="CHAPERONIN10"/>
</dbReference>
<dbReference type="SMART" id="SM00883">
    <property type="entry name" value="Cpn10"/>
    <property type="match status" value="1"/>
</dbReference>
<dbReference type="SUPFAM" id="SSF50129">
    <property type="entry name" value="GroES-like"/>
    <property type="match status" value="1"/>
</dbReference>
<dbReference type="PROSITE" id="PS00681">
    <property type="entry name" value="CHAPERONINS_CPN10"/>
    <property type="match status" value="1"/>
</dbReference>
<name>CH10_NITOC</name>
<proteinExistence type="inferred from homology"/>
<feature type="chain" id="PRO_1000025313" description="Co-chaperonin GroES">
    <location>
        <begin position="1"/>
        <end position="96"/>
    </location>
</feature>